<comment type="catalytic activity">
    <reaction evidence="1">
        <text>L-histidinol phosphate + 2-oxoglutarate = 3-(imidazol-4-yl)-2-oxopropyl phosphate + L-glutamate</text>
        <dbReference type="Rhea" id="RHEA:23744"/>
        <dbReference type="ChEBI" id="CHEBI:16810"/>
        <dbReference type="ChEBI" id="CHEBI:29985"/>
        <dbReference type="ChEBI" id="CHEBI:57766"/>
        <dbReference type="ChEBI" id="CHEBI:57980"/>
        <dbReference type="EC" id="2.6.1.9"/>
    </reaction>
</comment>
<comment type="cofactor">
    <cofactor evidence="1">
        <name>pyridoxal 5'-phosphate</name>
        <dbReference type="ChEBI" id="CHEBI:597326"/>
    </cofactor>
</comment>
<comment type="pathway">
    <text evidence="1">Amino-acid biosynthesis; L-histidine biosynthesis; L-histidine from 5-phospho-alpha-D-ribose 1-diphosphate: step 7/9.</text>
</comment>
<comment type="subunit">
    <text evidence="1">Homodimer.</text>
</comment>
<comment type="similarity">
    <text evidence="1">Belongs to the class-II pyridoxal-phosphate-dependent aminotransferase family. Histidinol-phosphate aminotransferase subfamily.</text>
</comment>
<accession>Q57MS2</accession>
<feature type="chain" id="PRO_0000153441" description="Histidinol-phosphate aminotransferase">
    <location>
        <begin position="1"/>
        <end position="359"/>
    </location>
</feature>
<feature type="modified residue" description="N6-(pyridoxal phosphate)lysine" evidence="1">
    <location>
        <position position="217"/>
    </location>
</feature>
<organism>
    <name type="scientific">Salmonella choleraesuis (strain SC-B67)</name>
    <dbReference type="NCBI Taxonomy" id="321314"/>
    <lineage>
        <taxon>Bacteria</taxon>
        <taxon>Pseudomonadati</taxon>
        <taxon>Pseudomonadota</taxon>
        <taxon>Gammaproteobacteria</taxon>
        <taxon>Enterobacterales</taxon>
        <taxon>Enterobacteriaceae</taxon>
        <taxon>Salmonella</taxon>
    </lineage>
</organism>
<evidence type="ECO:0000255" key="1">
    <source>
        <dbReference type="HAMAP-Rule" id="MF_01023"/>
    </source>
</evidence>
<sequence>MSTENTLSVADLARENVRNLVPYQSARRLGGNGDVWLNANEFPTAVEFQLTQQTLNRYPECQPKAVIENYAQYAGVKPEQVLVSRGADEGIELMIRAFCEPGKDAILYCPPTYGMYSVSAETIGVERRTVPALENWQLDLQGISDNLDGTKVVFVCSPNNPTGQLINPQDLRTLLELTRGKAIVVADEAYIEFCPQATLTGWLVEYPHLVILRTLSKAFALAGLRCGFTLANEEVINLLLKVIAPYPLSTPVADIAAQALSPQGINAMRDRVAQTVQERQYLVNALQQTACVEHVFDSETNYILARFTASSNVFKSLWDQGIILRDQNKQPSLSGCLRITVGTRQENQRVIDALRAEPV</sequence>
<dbReference type="EC" id="2.6.1.9" evidence="1"/>
<dbReference type="EMBL" id="AE017220">
    <property type="protein sequence ID" value="AAX65989.1"/>
    <property type="molecule type" value="Genomic_DNA"/>
</dbReference>
<dbReference type="RefSeq" id="WP_001540360.1">
    <property type="nucleotide sequence ID" value="NC_006905.1"/>
</dbReference>
<dbReference type="SMR" id="Q57MS2"/>
<dbReference type="KEGG" id="sec:SCH_2083"/>
<dbReference type="HOGENOM" id="CLU_017584_3_1_6"/>
<dbReference type="UniPathway" id="UPA00031">
    <property type="reaction ID" value="UER00012"/>
</dbReference>
<dbReference type="Proteomes" id="UP000000538">
    <property type="component" value="Chromosome"/>
</dbReference>
<dbReference type="GO" id="GO:0004400">
    <property type="term" value="F:histidinol-phosphate transaminase activity"/>
    <property type="evidence" value="ECO:0007669"/>
    <property type="project" value="UniProtKB-UniRule"/>
</dbReference>
<dbReference type="GO" id="GO:0030170">
    <property type="term" value="F:pyridoxal phosphate binding"/>
    <property type="evidence" value="ECO:0007669"/>
    <property type="project" value="InterPro"/>
</dbReference>
<dbReference type="GO" id="GO:0000105">
    <property type="term" value="P:L-histidine biosynthetic process"/>
    <property type="evidence" value="ECO:0007669"/>
    <property type="project" value="UniProtKB-UniRule"/>
</dbReference>
<dbReference type="CDD" id="cd00609">
    <property type="entry name" value="AAT_like"/>
    <property type="match status" value="1"/>
</dbReference>
<dbReference type="FunFam" id="3.40.640.10:FF:000032">
    <property type="entry name" value="Histidinol-phosphate aminotransferase"/>
    <property type="match status" value="1"/>
</dbReference>
<dbReference type="Gene3D" id="3.90.1150.10">
    <property type="entry name" value="Aspartate Aminotransferase, domain 1"/>
    <property type="match status" value="1"/>
</dbReference>
<dbReference type="Gene3D" id="3.40.640.10">
    <property type="entry name" value="Type I PLP-dependent aspartate aminotransferase-like (Major domain)"/>
    <property type="match status" value="1"/>
</dbReference>
<dbReference type="HAMAP" id="MF_01023">
    <property type="entry name" value="HisC_aminotrans_2"/>
    <property type="match status" value="1"/>
</dbReference>
<dbReference type="InterPro" id="IPR001917">
    <property type="entry name" value="Aminotrans_II_pyridoxalP_BS"/>
</dbReference>
<dbReference type="InterPro" id="IPR004839">
    <property type="entry name" value="Aminotransferase_I/II_large"/>
</dbReference>
<dbReference type="InterPro" id="IPR005861">
    <property type="entry name" value="HisP_aminotrans"/>
</dbReference>
<dbReference type="InterPro" id="IPR015424">
    <property type="entry name" value="PyrdxlP-dep_Trfase"/>
</dbReference>
<dbReference type="InterPro" id="IPR015421">
    <property type="entry name" value="PyrdxlP-dep_Trfase_major"/>
</dbReference>
<dbReference type="InterPro" id="IPR015422">
    <property type="entry name" value="PyrdxlP-dep_Trfase_small"/>
</dbReference>
<dbReference type="NCBIfam" id="TIGR01141">
    <property type="entry name" value="hisC"/>
    <property type="match status" value="1"/>
</dbReference>
<dbReference type="PANTHER" id="PTHR42885:SF2">
    <property type="entry name" value="HISTIDINOL-PHOSPHATE AMINOTRANSFERASE"/>
    <property type="match status" value="1"/>
</dbReference>
<dbReference type="PANTHER" id="PTHR42885">
    <property type="entry name" value="HISTIDINOL-PHOSPHATE AMINOTRANSFERASE-RELATED"/>
    <property type="match status" value="1"/>
</dbReference>
<dbReference type="Pfam" id="PF00155">
    <property type="entry name" value="Aminotran_1_2"/>
    <property type="match status" value="1"/>
</dbReference>
<dbReference type="SUPFAM" id="SSF53383">
    <property type="entry name" value="PLP-dependent transferases"/>
    <property type="match status" value="1"/>
</dbReference>
<dbReference type="PROSITE" id="PS00599">
    <property type="entry name" value="AA_TRANSFER_CLASS_2"/>
    <property type="match status" value="1"/>
</dbReference>
<proteinExistence type="inferred from homology"/>
<name>HIS8_SALCH</name>
<keyword id="KW-0028">Amino-acid biosynthesis</keyword>
<keyword id="KW-0032">Aminotransferase</keyword>
<keyword id="KW-0368">Histidine biosynthesis</keyword>
<keyword id="KW-0663">Pyridoxal phosphate</keyword>
<keyword id="KW-0808">Transferase</keyword>
<protein>
    <recommendedName>
        <fullName evidence="1">Histidinol-phosphate aminotransferase</fullName>
        <ecNumber evidence="1">2.6.1.9</ecNumber>
    </recommendedName>
    <alternativeName>
        <fullName evidence="1">Imidazole acetol-phosphate transaminase</fullName>
    </alternativeName>
</protein>
<gene>
    <name evidence="1" type="primary">hisC</name>
    <name type="ordered locus">SCH_2083</name>
</gene>
<reference key="1">
    <citation type="journal article" date="2005" name="Nucleic Acids Res.">
        <title>The genome sequence of Salmonella enterica serovar Choleraesuis, a highly invasive and resistant zoonotic pathogen.</title>
        <authorList>
            <person name="Chiu C.-H."/>
            <person name="Tang P."/>
            <person name="Chu C."/>
            <person name="Hu S."/>
            <person name="Bao Q."/>
            <person name="Yu J."/>
            <person name="Chou Y.-Y."/>
            <person name="Wang H.-S."/>
            <person name="Lee Y.-S."/>
        </authorList>
    </citation>
    <scope>NUCLEOTIDE SEQUENCE [LARGE SCALE GENOMIC DNA]</scope>
    <source>
        <strain>SC-B67</strain>
    </source>
</reference>